<reference key="1">
    <citation type="submission" date="2006-12" db="EMBL/GenBank/DDBJ databases">
        <title>Bifidobacterium adolescentis complete genome sequence.</title>
        <authorList>
            <person name="Suzuki T."/>
            <person name="Tsuda Y."/>
            <person name="Kanou N."/>
            <person name="Inoue T."/>
            <person name="Kumazaki K."/>
            <person name="Nagano S."/>
            <person name="Hirai S."/>
            <person name="Tanaka K."/>
            <person name="Watanabe K."/>
        </authorList>
    </citation>
    <scope>NUCLEOTIDE SEQUENCE [LARGE SCALE GENOMIC DNA]</scope>
    <source>
        <strain>ATCC 15703 / DSM 20083 / NCTC 11814 / E194a</strain>
    </source>
</reference>
<proteinExistence type="inferred from homology"/>
<keyword id="KW-0067">ATP-binding</keyword>
<keyword id="KW-0436">Ligase</keyword>
<keyword id="KW-0460">Magnesium</keyword>
<keyword id="KW-0479">Metal-binding</keyword>
<keyword id="KW-0547">Nucleotide-binding</keyword>
<keyword id="KW-1185">Reference proteome</keyword>
<keyword id="KW-0833">Ubl conjugation pathway</keyword>
<name>PAFA_BIFAA</name>
<sequence>MPQLRDSGNHSTAPLDAHTKDEIQSFARIFGIETEYGVSVTGSDRPCDAGQTAMMMFQPIVAEARSTNTYIENGSRLYLDVGSHPEYATAEARDPMDALALDAAGELVMRDLALDAQRRLRSIQGAGSTVHVFKNNVDSAGHSFGCHENYLVRRFVPLKTIEQELLPFLITRQLFTGAGRMGEQGFQITQRADFLDEAVSSATTRSRPMVNTRDEPHADPDAFRRLHVIIGDSNRSQWATMMKLATTHLVLCVIEQAGREGKDSGFARFSFADASAANHKVSRDLTGVEASFDMADGTVMEGGAVAIQERYLEIVERFVGQHPEVCSSLPRTDVHEVIRRWRRVIEAFRSGVSETFADKVDWLAKRRLFDMLRNRAGGRLSVSKLEQLDMDYHDVANGALYASLCRRGAMRTLVNESQAHEAIDVPPHDTRAALRGRFIQSARSHNAQYSCDWTRLSLTSPNRMDVTLLDPFDAQPSDRFLTILEALQ</sequence>
<feature type="chain" id="PRO_0000395895" description="Pup--protein ligase">
    <location>
        <begin position="1"/>
        <end position="488"/>
    </location>
</feature>
<feature type="active site" description="Proton acceptor" evidence="1">
    <location>
        <position position="80"/>
    </location>
</feature>
<feature type="binding site" evidence="1">
    <location>
        <position position="33"/>
    </location>
    <ligand>
        <name>Mg(2+)</name>
        <dbReference type="ChEBI" id="CHEBI:18420"/>
    </ligand>
</feature>
<feature type="binding site" evidence="1">
    <location>
        <position position="76"/>
    </location>
    <ligand>
        <name>ATP</name>
        <dbReference type="ChEBI" id="CHEBI:30616"/>
    </ligand>
</feature>
<feature type="binding site" evidence="1">
    <location>
        <position position="78"/>
    </location>
    <ligand>
        <name>Mg(2+)</name>
        <dbReference type="ChEBI" id="CHEBI:18420"/>
    </ligand>
</feature>
<feature type="binding site" evidence="1">
    <location>
        <position position="86"/>
    </location>
    <ligand>
        <name>Mg(2+)</name>
        <dbReference type="ChEBI" id="CHEBI:18420"/>
    </ligand>
</feature>
<feature type="binding site" evidence="1">
    <location>
        <position position="89"/>
    </location>
    <ligand>
        <name>ATP</name>
        <dbReference type="ChEBI" id="CHEBI:30616"/>
    </ligand>
</feature>
<feature type="binding site" evidence="1">
    <location>
        <position position="453"/>
    </location>
    <ligand>
        <name>ATP</name>
        <dbReference type="ChEBI" id="CHEBI:30616"/>
    </ligand>
</feature>
<accession>A1A0U7</accession>
<gene>
    <name evidence="1" type="primary">pafA</name>
    <name type="ordered locus">BAD_0549</name>
</gene>
<evidence type="ECO:0000255" key="1">
    <source>
        <dbReference type="HAMAP-Rule" id="MF_02111"/>
    </source>
</evidence>
<dbReference type="EC" id="6.3.1.19" evidence="1"/>
<dbReference type="EMBL" id="AP009256">
    <property type="protein sequence ID" value="BAF39330.1"/>
    <property type="molecule type" value="Genomic_DNA"/>
</dbReference>
<dbReference type="RefSeq" id="WP_011742991.1">
    <property type="nucleotide sequence ID" value="NC_008618.1"/>
</dbReference>
<dbReference type="SMR" id="A1A0U7"/>
<dbReference type="STRING" id="367928.BAD_0549"/>
<dbReference type="PaxDb" id="1680-BADO_0563"/>
<dbReference type="DNASU" id="4556129"/>
<dbReference type="GeneID" id="4556129"/>
<dbReference type="KEGG" id="bad:BAD_0549"/>
<dbReference type="HOGENOM" id="CLU_040524_0_1_11"/>
<dbReference type="BRENDA" id="6.3.1.19">
    <property type="organism ID" value="842"/>
</dbReference>
<dbReference type="UniPathway" id="UPA00997"/>
<dbReference type="UniPathway" id="UPA00998"/>
<dbReference type="Proteomes" id="UP000008702">
    <property type="component" value="Chromosome"/>
</dbReference>
<dbReference type="GO" id="GO:0005524">
    <property type="term" value="F:ATP binding"/>
    <property type="evidence" value="ECO:0007669"/>
    <property type="project" value="UniProtKB-UniRule"/>
</dbReference>
<dbReference type="GO" id="GO:0016879">
    <property type="term" value="F:ligase activity, forming carbon-nitrogen bonds"/>
    <property type="evidence" value="ECO:0007669"/>
    <property type="project" value="InterPro"/>
</dbReference>
<dbReference type="GO" id="GO:0000287">
    <property type="term" value="F:magnesium ion binding"/>
    <property type="evidence" value="ECO:0007669"/>
    <property type="project" value="UniProtKB-UniRule"/>
</dbReference>
<dbReference type="GO" id="GO:0019787">
    <property type="term" value="F:ubiquitin-like protein transferase activity"/>
    <property type="evidence" value="ECO:0007669"/>
    <property type="project" value="UniProtKB-UniRule"/>
</dbReference>
<dbReference type="GO" id="GO:0019941">
    <property type="term" value="P:modification-dependent protein catabolic process"/>
    <property type="evidence" value="ECO:0007669"/>
    <property type="project" value="UniProtKB-UniRule"/>
</dbReference>
<dbReference type="GO" id="GO:0010498">
    <property type="term" value="P:proteasomal protein catabolic process"/>
    <property type="evidence" value="ECO:0007669"/>
    <property type="project" value="UniProtKB-UniRule"/>
</dbReference>
<dbReference type="GO" id="GO:0070490">
    <property type="term" value="P:protein pupylation"/>
    <property type="evidence" value="ECO:0007669"/>
    <property type="project" value="UniProtKB-UniRule"/>
</dbReference>
<dbReference type="HAMAP" id="MF_02111">
    <property type="entry name" value="Pup_ligase"/>
    <property type="match status" value="1"/>
</dbReference>
<dbReference type="InterPro" id="IPR022279">
    <property type="entry name" value="Pup_ligase"/>
</dbReference>
<dbReference type="InterPro" id="IPR004347">
    <property type="entry name" value="Pup_ligase/deamidase"/>
</dbReference>
<dbReference type="NCBIfam" id="TIGR03686">
    <property type="entry name" value="pupylate_PafA"/>
    <property type="match status" value="1"/>
</dbReference>
<dbReference type="PANTHER" id="PTHR42307">
    <property type="entry name" value="PUP DEAMIDASE/DEPUPYLASE"/>
    <property type="match status" value="1"/>
</dbReference>
<dbReference type="PANTHER" id="PTHR42307:SF3">
    <property type="entry name" value="PUP--PROTEIN LIGASE"/>
    <property type="match status" value="1"/>
</dbReference>
<dbReference type="Pfam" id="PF03136">
    <property type="entry name" value="Pup_ligase"/>
    <property type="match status" value="1"/>
</dbReference>
<protein>
    <recommendedName>
        <fullName evidence="1">Pup--protein ligase</fullName>
        <ecNumber evidence="1">6.3.1.19</ecNumber>
    </recommendedName>
    <alternativeName>
        <fullName evidence="1">Proteasome accessory factor A</fullName>
    </alternativeName>
    <alternativeName>
        <fullName evidence="1">Pup-conjugating enzyme</fullName>
    </alternativeName>
</protein>
<comment type="function">
    <text evidence="1">Catalyzes the covalent attachment of the prokaryotic ubiquitin-like protein modifier Pup to the proteasomal substrate proteins, thereby targeting them for proteasomal degradation. This tagging system is termed pupylation. The ligation reaction involves the side-chain carboxylate of the C-terminal glutamate of Pup and the side-chain amino group of a substrate lysine.</text>
</comment>
<comment type="catalytic activity">
    <reaction evidence="1">
        <text>ATP + [prokaryotic ubiquitin-like protein]-L-glutamate + [protein]-L-lysine = ADP + phosphate + N(6)-([prokaryotic ubiquitin-like protein]-gamma-L-glutamyl)-[protein]-L-lysine.</text>
        <dbReference type="EC" id="6.3.1.19"/>
    </reaction>
</comment>
<comment type="pathway">
    <text evidence="1">Protein degradation; proteasomal Pup-dependent pathway.</text>
</comment>
<comment type="pathway">
    <text evidence="1">Protein modification; protein pupylation.</text>
</comment>
<comment type="miscellaneous">
    <text evidence="1">The reaction mechanism probably proceeds via the activation of Pup by phosphorylation of its C-terminal glutamate, which is then subject to nucleophilic attack by the substrate lysine, resulting in an isopeptide bond and the release of phosphate as a good leaving group.</text>
</comment>
<comment type="similarity">
    <text evidence="1">Belongs to the Pup ligase/Pup deamidase family. Pup-conjugating enzyme subfamily.</text>
</comment>
<organism>
    <name type="scientific">Bifidobacterium adolescentis (strain ATCC 15703 / DSM 20083 / NCTC 11814 / E194a)</name>
    <dbReference type="NCBI Taxonomy" id="367928"/>
    <lineage>
        <taxon>Bacteria</taxon>
        <taxon>Bacillati</taxon>
        <taxon>Actinomycetota</taxon>
        <taxon>Actinomycetes</taxon>
        <taxon>Bifidobacteriales</taxon>
        <taxon>Bifidobacteriaceae</taxon>
        <taxon>Bifidobacterium</taxon>
    </lineage>
</organism>